<organism>
    <name type="scientific">Mus musculus</name>
    <name type="common">Mouse</name>
    <dbReference type="NCBI Taxonomy" id="10090"/>
    <lineage>
        <taxon>Eukaryota</taxon>
        <taxon>Metazoa</taxon>
        <taxon>Chordata</taxon>
        <taxon>Craniata</taxon>
        <taxon>Vertebrata</taxon>
        <taxon>Euteleostomi</taxon>
        <taxon>Mammalia</taxon>
        <taxon>Eutheria</taxon>
        <taxon>Euarchontoglires</taxon>
        <taxon>Glires</taxon>
        <taxon>Rodentia</taxon>
        <taxon>Myomorpha</taxon>
        <taxon>Muroidea</taxon>
        <taxon>Muridae</taxon>
        <taxon>Murinae</taxon>
        <taxon>Mus</taxon>
        <taxon>Mus</taxon>
    </lineage>
</organism>
<gene>
    <name evidence="3" type="primary">Fimp</name>
</gene>
<keyword id="KW-0025">Alternative splicing</keyword>
<keyword id="KW-1003">Cell membrane</keyword>
<keyword id="KW-0278">Fertilization</keyword>
<keyword id="KW-0472">Membrane</keyword>
<keyword id="KW-1185">Reference proteome</keyword>
<keyword id="KW-0964">Secreted</keyword>
<keyword id="KW-0732">Signal</keyword>
<keyword id="KW-0812">Transmembrane</keyword>
<keyword id="KW-1133">Transmembrane helix</keyword>
<name>FIMP_MOUSE</name>
<accession>E9Q9R3</accession>
<accession>Q8CEL4</accession>
<protein>
    <recommendedName>
        <fullName evidence="3">Fertilization-influencing membrane protein</fullName>
    </recommendedName>
</protein>
<comment type="function">
    <molecule>Isoform 1</molecule>
    <text evidence="2">Plays a role in sperm-oocyte fusion process during fertilization.</text>
</comment>
<comment type="subcellular location">
    <molecule>Isoform 1</molecule>
    <subcellularLocation>
        <location evidence="5">Cell membrane</location>
        <topology evidence="1">Single-pass type I membrane protein</topology>
    </subcellularLocation>
    <text evidence="2">Localized to the equatorial segment of the sperm head.</text>
</comment>
<comment type="subcellular location">
    <molecule>Isoform 2</molecule>
    <subcellularLocation>
        <location evidence="5">Secreted</location>
    </subcellularLocation>
</comment>
<comment type="alternative products">
    <event type="alternative splicing"/>
    <isoform>
        <id>E9Q9R3-1</id>
        <name>1</name>
        <sequence type="displayed"/>
    </isoform>
    <isoform>
        <id>E9Q9R3-2</id>
        <name>2</name>
        <sequence type="described" ref="VSP_060728 VSP_060729"/>
    </isoform>
</comment>
<comment type="tissue specificity">
    <text evidence="2">Testis-specific.</text>
</comment>
<comment type="disruption phenotype">
    <text evidence="2">Deficient mice have no overt developmental abnormalities. Furthermore, no deleterious effects on testicular histology and sperm morphology are observed. However male mice are severely subfertile, their spermatozoa show impaired ability to fuse with the oocytes.</text>
</comment>
<comment type="sequence caution" evidence="4">
    <conflict type="erroneous initiation">
        <sequence resource="EMBL-CDS" id="AAH48622"/>
    </conflict>
    <text>Truncated N-terminus.</text>
</comment>
<comment type="sequence caution" evidence="4">
    <conflict type="erroneous initiation">
        <sequence resource="EMBL-CDS" id="BAC25600"/>
    </conflict>
    <text>Truncated N-terminus.</text>
</comment>
<sequence>MKLWLWVAVGVWMLMAELGTIETAPRRDGTRPSVSGARPQQVVNRLFFDYPDSDRASLLAVARFIGEKPITFVKTDSSPGLFQNILVGTLVVAFFFLLFQFCLHVNFQKGA</sequence>
<dbReference type="EMBL" id="AK019625">
    <property type="protein sequence ID" value="BAC25600.1"/>
    <property type="status" value="ALT_INIT"/>
    <property type="molecule type" value="mRNA"/>
</dbReference>
<dbReference type="EMBL" id="AC124505">
    <property type="status" value="NOT_ANNOTATED_CDS"/>
    <property type="molecule type" value="Genomic_DNA"/>
</dbReference>
<dbReference type="EMBL" id="BC048622">
    <property type="protein sequence ID" value="AAH48622.1"/>
    <property type="status" value="ALT_INIT"/>
    <property type="molecule type" value="mRNA"/>
</dbReference>
<dbReference type="CCDS" id="CCDS52402.1">
    <molecule id="E9Q9R3-1"/>
</dbReference>
<dbReference type="RefSeq" id="NP_898954.2">
    <molecule id="E9Q9R3-1"/>
    <property type="nucleotide sequence ID" value="NM_183131.2"/>
</dbReference>
<dbReference type="FunCoup" id="E9Q9R3">
    <property type="interactions" value="3"/>
</dbReference>
<dbReference type="STRING" id="10090.ENSMUSP00000049614"/>
<dbReference type="PhosphoSitePlus" id="E9Q9R3"/>
<dbReference type="PaxDb" id="10090-ENSMUSP00000049614"/>
<dbReference type="Ensembl" id="ENSMUST00000061695.5">
    <molecule id="E9Q9R3-1"/>
    <property type="protein sequence ID" value="ENSMUSP00000049614.4"/>
    <property type="gene ID" value="ENSMUSG00000045989.5"/>
</dbReference>
<dbReference type="GeneID" id="78118"/>
<dbReference type="KEGG" id="mmu:78118"/>
<dbReference type="UCSC" id="uc009jta.1">
    <molecule id="E9Q9R3-1"/>
    <property type="organism name" value="mouse"/>
</dbReference>
<dbReference type="AGR" id="MGI:1925368"/>
<dbReference type="MGI" id="MGI:1925368">
    <property type="gene designation" value="4930451I11Rik"/>
</dbReference>
<dbReference type="VEuPathDB" id="HostDB:ENSMUSG00000045989"/>
<dbReference type="eggNOG" id="ENOG502RVJG">
    <property type="taxonomic scope" value="Eukaryota"/>
</dbReference>
<dbReference type="GeneTree" id="ENSGT00390000002780"/>
<dbReference type="HOGENOM" id="CLU_170753_0_0_1"/>
<dbReference type="InParanoid" id="E9Q9R3"/>
<dbReference type="OMA" id="IERPDFF"/>
<dbReference type="OrthoDB" id="9606174at2759"/>
<dbReference type="TreeFam" id="TF338342"/>
<dbReference type="BioGRID-ORCS" id="78118">
    <property type="hits" value="2 hits in 76 CRISPR screens"/>
</dbReference>
<dbReference type="ChiTaRS" id="4930451I11Rik">
    <property type="organism name" value="mouse"/>
</dbReference>
<dbReference type="PRO" id="PR:E9Q9R3"/>
<dbReference type="Proteomes" id="UP000000589">
    <property type="component" value="Chromosome 7"/>
</dbReference>
<dbReference type="RNAct" id="E9Q9R3">
    <property type="molecule type" value="protein"/>
</dbReference>
<dbReference type="Bgee" id="ENSMUSG00000045989">
    <property type="expression patterns" value="Expressed in blastoderm cell in morula and 16 other cell types or tissues"/>
</dbReference>
<dbReference type="ExpressionAtlas" id="E9Q9R3">
    <property type="expression patterns" value="baseline and differential"/>
</dbReference>
<dbReference type="GO" id="GO:0005576">
    <property type="term" value="C:extracellular region"/>
    <property type="evidence" value="ECO:0007669"/>
    <property type="project" value="UniProtKB-SubCell"/>
</dbReference>
<dbReference type="GO" id="GO:0005886">
    <property type="term" value="C:plasma membrane"/>
    <property type="evidence" value="ECO:0007669"/>
    <property type="project" value="UniProtKB-SubCell"/>
</dbReference>
<dbReference type="GO" id="GO:0009566">
    <property type="term" value="P:fertilization"/>
    <property type="evidence" value="ECO:0000315"/>
    <property type="project" value="UniProtKB"/>
</dbReference>
<dbReference type="GO" id="GO:0007342">
    <property type="term" value="P:fusion of sperm to egg plasma membrane involved in single fertilization"/>
    <property type="evidence" value="ECO:0000315"/>
    <property type="project" value="UniProtKB"/>
</dbReference>
<dbReference type="InterPro" id="IPR038813">
    <property type="entry name" value="FIMP"/>
</dbReference>
<dbReference type="PANTHER" id="PTHR38648:SF1">
    <property type="entry name" value="FERTILIZATION-INFLUENCING MEMBRANE PROTEIN"/>
    <property type="match status" value="1"/>
</dbReference>
<dbReference type="PANTHER" id="PTHR38648">
    <property type="entry name" value="RIKEN CDNA 4930451I11 GENE"/>
    <property type="match status" value="1"/>
</dbReference>
<dbReference type="Pfam" id="PF17672">
    <property type="entry name" value="FIMP"/>
    <property type="match status" value="1"/>
</dbReference>
<feature type="signal peptide" evidence="1">
    <location>
        <begin position="1"/>
        <end position="23"/>
    </location>
</feature>
<feature type="chain" id="PRO_5003244526" description="Fertilization-influencing membrane protein" evidence="1">
    <location>
        <begin position="24"/>
        <end position="111"/>
    </location>
</feature>
<feature type="transmembrane region" description="Helical" evidence="1">
    <location>
        <begin position="85"/>
        <end position="105"/>
    </location>
</feature>
<feature type="splice variant" id="VSP_060728" description="In isoform 2." evidence="3">
    <original>DSSPGLFQNILVGTLVV</original>
    <variation>GTSRKGPNEISSQSQLR</variation>
    <location>
        <begin position="76"/>
        <end position="92"/>
    </location>
</feature>
<feature type="splice variant" id="VSP_060729" description="In isoform 2." evidence="3">
    <location>
        <begin position="93"/>
        <end position="111"/>
    </location>
</feature>
<proteinExistence type="evidence at transcript level"/>
<reference key="1">
    <citation type="journal article" date="2020" name="Proc. Natl. Acad. Sci. U.S.A.">
        <title>Spermatozoa lacking Fertilization Influencing Membrane Protein (FIMP) fail to fuse with oocytes in mice.</title>
        <authorList>
            <person name="Fujihara Y."/>
            <person name="Lu Y."/>
            <person name="Noda T."/>
            <person name="Oji A."/>
            <person name="Larasati T."/>
            <person name="Kojima-Kita K."/>
            <person name="Yu Z."/>
            <person name="Matzuk R.M."/>
            <person name="Matzuk M.M."/>
            <person name="Ikawa M."/>
        </authorList>
    </citation>
    <scope>NUCLEOTIDE SEQUENCE [MRNA] (ISOFORMS 1 AND 2)</scope>
    <scope>TISSUE SPECIFICITY</scope>
    <scope>FUNCTION (ISOFOFRM 1)</scope>
    <scope>DISRUPTION PHENOTYPE</scope>
    <scope>SUBCELLULAR LOCATION</scope>
</reference>
<reference key="2">
    <citation type="journal article" date="2005" name="Science">
        <title>The transcriptional landscape of the mammalian genome.</title>
        <authorList>
            <person name="Carninci P."/>
            <person name="Kasukawa T."/>
            <person name="Katayama S."/>
            <person name="Gough J."/>
            <person name="Frith M.C."/>
            <person name="Maeda N."/>
            <person name="Oyama R."/>
            <person name="Ravasi T."/>
            <person name="Lenhard B."/>
            <person name="Wells C."/>
            <person name="Kodzius R."/>
            <person name="Shimokawa K."/>
            <person name="Bajic V.B."/>
            <person name="Brenner S.E."/>
            <person name="Batalov S."/>
            <person name="Forrest A.R."/>
            <person name="Zavolan M."/>
            <person name="Davis M.J."/>
            <person name="Wilming L.G."/>
            <person name="Aidinis V."/>
            <person name="Allen J.E."/>
            <person name="Ambesi-Impiombato A."/>
            <person name="Apweiler R."/>
            <person name="Aturaliya R.N."/>
            <person name="Bailey T.L."/>
            <person name="Bansal M."/>
            <person name="Baxter L."/>
            <person name="Beisel K.W."/>
            <person name="Bersano T."/>
            <person name="Bono H."/>
            <person name="Chalk A.M."/>
            <person name="Chiu K.P."/>
            <person name="Choudhary V."/>
            <person name="Christoffels A."/>
            <person name="Clutterbuck D.R."/>
            <person name="Crowe M.L."/>
            <person name="Dalla E."/>
            <person name="Dalrymple B.P."/>
            <person name="de Bono B."/>
            <person name="Della Gatta G."/>
            <person name="di Bernardo D."/>
            <person name="Down T."/>
            <person name="Engstrom P."/>
            <person name="Fagiolini M."/>
            <person name="Faulkner G."/>
            <person name="Fletcher C.F."/>
            <person name="Fukushima T."/>
            <person name="Furuno M."/>
            <person name="Futaki S."/>
            <person name="Gariboldi M."/>
            <person name="Georgii-Hemming P."/>
            <person name="Gingeras T.R."/>
            <person name="Gojobori T."/>
            <person name="Green R.E."/>
            <person name="Gustincich S."/>
            <person name="Harbers M."/>
            <person name="Hayashi Y."/>
            <person name="Hensch T.K."/>
            <person name="Hirokawa N."/>
            <person name="Hill D."/>
            <person name="Huminiecki L."/>
            <person name="Iacono M."/>
            <person name="Ikeo K."/>
            <person name="Iwama A."/>
            <person name="Ishikawa T."/>
            <person name="Jakt M."/>
            <person name="Kanapin A."/>
            <person name="Katoh M."/>
            <person name="Kawasawa Y."/>
            <person name="Kelso J."/>
            <person name="Kitamura H."/>
            <person name="Kitano H."/>
            <person name="Kollias G."/>
            <person name="Krishnan S.P."/>
            <person name="Kruger A."/>
            <person name="Kummerfeld S.K."/>
            <person name="Kurochkin I.V."/>
            <person name="Lareau L.F."/>
            <person name="Lazarevic D."/>
            <person name="Lipovich L."/>
            <person name="Liu J."/>
            <person name="Liuni S."/>
            <person name="McWilliam S."/>
            <person name="Madan Babu M."/>
            <person name="Madera M."/>
            <person name="Marchionni L."/>
            <person name="Matsuda H."/>
            <person name="Matsuzawa S."/>
            <person name="Miki H."/>
            <person name="Mignone F."/>
            <person name="Miyake S."/>
            <person name="Morris K."/>
            <person name="Mottagui-Tabar S."/>
            <person name="Mulder N."/>
            <person name="Nakano N."/>
            <person name="Nakauchi H."/>
            <person name="Ng P."/>
            <person name="Nilsson R."/>
            <person name="Nishiguchi S."/>
            <person name="Nishikawa S."/>
            <person name="Nori F."/>
            <person name="Ohara O."/>
            <person name="Okazaki Y."/>
            <person name="Orlando V."/>
            <person name="Pang K.C."/>
            <person name="Pavan W.J."/>
            <person name="Pavesi G."/>
            <person name="Pesole G."/>
            <person name="Petrovsky N."/>
            <person name="Piazza S."/>
            <person name="Reed J."/>
            <person name="Reid J.F."/>
            <person name="Ring B.Z."/>
            <person name="Ringwald M."/>
            <person name="Rost B."/>
            <person name="Ruan Y."/>
            <person name="Salzberg S.L."/>
            <person name="Sandelin A."/>
            <person name="Schneider C."/>
            <person name="Schoenbach C."/>
            <person name="Sekiguchi K."/>
            <person name="Semple C.A."/>
            <person name="Seno S."/>
            <person name="Sessa L."/>
            <person name="Sheng Y."/>
            <person name="Shibata Y."/>
            <person name="Shimada H."/>
            <person name="Shimada K."/>
            <person name="Silva D."/>
            <person name="Sinclair B."/>
            <person name="Sperling S."/>
            <person name="Stupka E."/>
            <person name="Sugiura K."/>
            <person name="Sultana R."/>
            <person name="Takenaka Y."/>
            <person name="Taki K."/>
            <person name="Tammoja K."/>
            <person name="Tan S.L."/>
            <person name="Tang S."/>
            <person name="Taylor M.S."/>
            <person name="Tegner J."/>
            <person name="Teichmann S.A."/>
            <person name="Ueda H.R."/>
            <person name="van Nimwegen E."/>
            <person name="Verardo R."/>
            <person name="Wei C.L."/>
            <person name="Yagi K."/>
            <person name="Yamanishi H."/>
            <person name="Zabarovsky E."/>
            <person name="Zhu S."/>
            <person name="Zimmer A."/>
            <person name="Hide W."/>
            <person name="Bult C."/>
            <person name="Grimmond S.M."/>
            <person name="Teasdale R.D."/>
            <person name="Liu E.T."/>
            <person name="Brusic V."/>
            <person name="Quackenbush J."/>
            <person name="Wahlestedt C."/>
            <person name="Mattick J.S."/>
            <person name="Hume D.A."/>
            <person name="Kai C."/>
            <person name="Sasaki D."/>
            <person name="Tomaru Y."/>
            <person name="Fukuda S."/>
            <person name="Kanamori-Katayama M."/>
            <person name="Suzuki M."/>
            <person name="Aoki J."/>
            <person name="Arakawa T."/>
            <person name="Iida J."/>
            <person name="Imamura K."/>
            <person name="Itoh M."/>
            <person name="Kato T."/>
            <person name="Kawaji H."/>
            <person name="Kawagashira N."/>
            <person name="Kawashima T."/>
            <person name="Kojima M."/>
            <person name="Kondo S."/>
            <person name="Konno H."/>
            <person name="Nakano K."/>
            <person name="Ninomiya N."/>
            <person name="Nishio T."/>
            <person name="Okada M."/>
            <person name="Plessy C."/>
            <person name="Shibata K."/>
            <person name="Shiraki T."/>
            <person name="Suzuki S."/>
            <person name="Tagami M."/>
            <person name="Waki K."/>
            <person name="Watahiki A."/>
            <person name="Okamura-Oho Y."/>
            <person name="Suzuki H."/>
            <person name="Kawai J."/>
            <person name="Hayashizaki Y."/>
        </authorList>
    </citation>
    <scope>NUCLEOTIDE SEQUENCE [LARGE SCALE MRNA]</scope>
    <source>
        <strain>C57BL/6J</strain>
        <tissue>Testis</tissue>
    </source>
</reference>
<reference key="3">
    <citation type="journal article" date="2009" name="PLoS Biol.">
        <title>Lineage-specific biology revealed by a finished genome assembly of the mouse.</title>
        <authorList>
            <person name="Church D.M."/>
            <person name="Goodstadt L."/>
            <person name="Hillier L.W."/>
            <person name="Zody M.C."/>
            <person name="Goldstein S."/>
            <person name="She X."/>
            <person name="Bult C.J."/>
            <person name="Agarwala R."/>
            <person name="Cherry J.L."/>
            <person name="DiCuccio M."/>
            <person name="Hlavina W."/>
            <person name="Kapustin Y."/>
            <person name="Meric P."/>
            <person name="Maglott D."/>
            <person name="Birtle Z."/>
            <person name="Marques A.C."/>
            <person name="Graves T."/>
            <person name="Zhou S."/>
            <person name="Teague B."/>
            <person name="Potamousis K."/>
            <person name="Churas C."/>
            <person name="Place M."/>
            <person name="Herschleb J."/>
            <person name="Runnheim R."/>
            <person name="Forrest D."/>
            <person name="Amos-Landgraf J."/>
            <person name="Schwartz D.C."/>
            <person name="Cheng Z."/>
            <person name="Lindblad-Toh K."/>
            <person name="Eichler E.E."/>
            <person name="Ponting C.P."/>
        </authorList>
    </citation>
    <scope>NUCLEOTIDE SEQUENCE [LARGE SCALE GENOMIC DNA]</scope>
    <source>
        <strain>C57BL/6J</strain>
    </source>
</reference>
<reference key="4">
    <citation type="journal article" date="2004" name="Genome Res.">
        <title>The status, quality, and expansion of the NIH full-length cDNA project: the Mammalian Gene Collection (MGC).</title>
        <authorList>
            <consortium name="The MGC Project Team"/>
        </authorList>
    </citation>
    <scope>NUCLEOTIDE SEQUENCE [LARGE SCALE MRNA]</scope>
    <source>
        <tissue>Testis</tissue>
    </source>
</reference>
<evidence type="ECO:0000255" key="1"/>
<evidence type="ECO:0000269" key="2">
    <source>
    </source>
</evidence>
<evidence type="ECO:0000303" key="3">
    <source>
    </source>
</evidence>
<evidence type="ECO:0000305" key="4"/>
<evidence type="ECO:0000305" key="5">
    <source>
    </source>
</evidence>